<gene>
    <name type="ordered locus">BH02760</name>
</gene>
<protein>
    <recommendedName>
        <fullName>Putative ABC transporter ATP-binding protein BH02760</fullName>
        <ecNumber>7.-.-.-</ecNumber>
    </recommendedName>
</protein>
<proteinExistence type="inferred from homology"/>
<evidence type="ECO:0000250" key="1"/>
<evidence type="ECO:0000255" key="2">
    <source>
        <dbReference type="PROSITE-ProRule" id="PRU00434"/>
    </source>
</evidence>
<evidence type="ECO:0000305" key="3"/>
<organism>
    <name type="scientific">Bartonella henselae (strain ATCC 49882 / DSM 28221 / CCUG 30454 / Houston 1)</name>
    <name type="common">Rochalimaea henselae</name>
    <dbReference type="NCBI Taxonomy" id="283166"/>
    <lineage>
        <taxon>Bacteria</taxon>
        <taxon>Pseudomonadati</taxon>
        <taxon>Pseudomonadota</taxon>
        <taxon>Alphaproteobacteria</taxon>
        <taxon>Hyphomicrobiales</taxon>
        <taxon>Bartonellaceae</taxon>
        <taxon>Bartonella</taxon>
    </lineage>
</organism>
<feature type="chain" id="PRO_0000091989" description="Putative ABC transporter ATP-binding protein BH02760">
    <location>
        <begin position="1"/>
        <end position="226"/>
    </location>
</feature>
<feature type="domain" description="ABC transporter" evidence="2">
    <location>
        <begin position="4"/>
        <end position="222"/>
    </location>
</feature>
<feature type="binding site" evidence="2">
    <location>
        <begin position="35"/>
        <end position="42"/>
    </location>
    <ligand>
        <name>ATP</name>
        <dbReference type="ChEBI" id="CHEBI:30616"/>
    </ligand>
</feature>
<dbReference type="EC" id="7.-.-.-"/>
<dbReference type="EMBL" id="BX897699">
    <property type="protein sequence ID" value="CAF27087.1"/>
    <property type="molecule type" value="Genomic_DNA"/>
</dbReference>
<dbReference type="RefSeq" id="WP_011180225.1">
    <property type="nucleotide sequence ID" value="NZ_LRIJ02000001.1"/>
</dbReference>
<dbReference type="SMR" id="Q6G4Q8"/>
<dbReference type="PaxDb" id="283166-BH02760"/>
<dbReference type="EnsemblBacteria" id="CAF27087">
    <property type="protein sequence ID" value="CAF27087"/>
    <property type="gene ID" value="BH02760"/>
</dbReference>
<dbReference type="KEGG" id="bhe:BH02760"/>
<dbReference type="eggNOG" id="COG1122">
    <property type="taxonomic scope" value="Bacteria"/>
</dbReference>
<dbReference type="OrthoDB" id="9782163at2"/>
<dbReference type="Proteomes" id="UP000000421">
    <property type="component" value="Chromosome"/>
</dbReference>
<dbReference type="GO" id="GO:0043190">
    <property type="term" value="C:ATP-binding cassette (ABC) transporter complex"/>
    <property type="evidence" value="ECO:0007669"/>
    <property type="project" value="TreeGrafter"/>
</dbReference>
<dbReference type="GO" id="GO:0005524">
    <property type="term" value="F:ATP binding"/>
    <property type="evidence" value="ECO:0007669"/>
    <property type="project" value="UniProtKB-KW"/>
</dbReference>
<dbReference type="GO" id="GO:0016887">
    <property type="term" value="F:ATP hydrolysis activity"/>
    <property type="evidence" value="ECO:0007669"/>
    <property type="project" value="InterPro"/>
</dbReference>
<dbReference type="GO" id="GO:0042626">
    <property type="term" value="F:ATPase-coupled transmembrane transporter activity"/>
    <property type="evidence" value="ECO:0007669"/>
    <property type="project" value="TreeGrafter"/>
</dbReference>
<dbReference type="CDD" id="cd03225">
    <property type="entry name" value="ABC_cobalt_CbiO_domain1"/>
    <property type="match status" value="1"/>
</dbReference>
<dbReference type="Gene3D" id="3.40.50.300">
    <property type="entry name" value="P-loop containing nucleotide triphosphate hydrolases"/>
    <property type="match status" value="1"/>
</dbReference>
<dbReference type="InterPro" id="IPR003593">
    <property type="entry name" value="AAA+_ATPase"/>
</dbReference>
<dbReference type="InterPro" id="IPR003439">
    <property type="entry name" value="ABC_transporter-like_ATP-bd"/>
</dbReference>
<dbReference type="InterPro" id="IPR017871">
    <property type="entry name" value="ABC_transporter-like_CS"/>
</dbReference>
<dbReference type="InterPro" id="IPR015856">
    <property type="entry name" value="ABC_transpr_CbiO/EcfA_su"/>
</dbReference>
<dbReference type="InterPro" id="IPR050095">
    <property type="entry name" value="ECF_ABC_transporter_ATP-bd"/>
</dbReference>
<dbReference type="InterPro" id="IPR027417">
    <property type="entry name" value="P-loop_NTPase"/>
</dbReference>
<dbReference type="PANTHER" id="PTHR43553:SF24">
    <property type="entry name" value="ENERGY-COUPLING FACTOR TRANSPORTER ATP-BINDING PROTEIN ECFA1"/>
    <property type="match status" value="1"/>
</dbReference>
<dbReference type="PANTHER" id="PTHR43553">
    <property type="entry name" value="HEAVY METAL TRANSPORTER"/>
    <property type="match status" value="1"/>
</dbReference>
<dbReference type="Pfam" id="PF00005">
    <property type="entry name" value="ABC_tran"/>
    <property type="match status" value="1"/>
</dbReference>
<dbReference type="SMART" id="SM00382">
    <property type="entry name" value="AAA"/>
    <property type="match status" value="1"/>
</dbReference>
<dbReference type="SUPFAM" id="SSF52540">
    <property type="entry name" value="P-loop containing nucleoside triphosphate hydrolases"/>
    <property type="match status" value="1"/>
</dbReference>
<dbReference type="PROSITE" id="PS00211">
    <property type="entry name" value="ABC_TRANSPORTER_1"/>
    <property type="match status" value="1"/>
</dbReference>
<dbReference type="PROSITE" id="PS50893">
    <property type="entry name" value="ABC_TRANSPORTER_2"/>
    <property type="match status" value="1"/>
</dbReference>
<reference key="1">
    <citation type="journal article" date="2004" name="Proc. Natl. Acad. Sci. U.S.A.">
        <title>The louse-borne human pathogen Bartonella quintana is a genomic derivative of the zoonotic agent Bartonella henselae.</title>
        <authorList>
            <person name="Alsmark U.C.M."/>
            <person name="Frank A.C."/>
            <person name="Karlberg E.O."/>
            <person name="Legault B.-A."/>
            <person name="Ardell D.H."/>
            <person name="Canbaeck B."/>
            <person name="Eriksson A.-S."/>
            <person name="Naeslund A.K."/>
            <person name="Handley S.A."/>
            <person name="Huvet M."/>
            <person name="La Scola B."/>
            <person name="Holmberg M."/>
            <person name="Andersson S.G.E."/>
        </authorList>
    </citation>
    <scope>NUCLEOTIDE SEQUENCE [LARGE SCALE GENOMIC DNA]</scope>
    <source>
        <strain>ATCC 49882 / DSM 28221 / CCUG 30454 / Houston 1</strain>
    </source>
</reference>
<sequence length="226" mass="25569">MGIIKFDKVTQVFGDLYVLRNITVQLTERRIAVIGANGSGKSTFVRLINGLQLPSHGFVSVDGLDTKNDAKAIKHKVGFVFQNPDNQIVLPLVEEDLSFGLKNLKLSKEEVKERVDEILQRYDLQNFRNHAVHLLSGGQKQLVAISGVVAMKPDYIIFDEPTTLLDLRNKRLITQVIEELSQTAIVVSHDLEFIRNFDRVLVFDKGEIVVDDIPLVAIKEYIRRMS</sequence>
<keyword id="KW-0067">ATP-binding</keyword>
<keyword id="KW-0997">Cell inner membrane</keyword>
<keyword id="KW-1003">Cell membrane</keyword>
<keyword id="KW-0472">Membrane</keyword>
<keyword id="KW-0547">Nucleotide-binding</keyword>
<keyword id="KW-1278">Translocase</keyword>
<keyword id="KW-0813">Transport</keyword>
<comment type="function">
    <text evidence="1">Probably part of an ABC transporter complex. Responsible for energy coupling to the transport system (By similarity).</text>
</comment>
<comment type="subcellular location">
    <subcellularLocation>
        <location evidence="1">Cell inner membrane</location>
        <topology evidence="1">Peripheral membrane protein</topology>
    </subcellularLocation>
</comment>
<comment type="similarity">
    <text evidence="3">Belongs to the ABC transporter superfamily.</text>
</comment>
<name>Y276_BARHE</name>
<accession>Q6G4Q8</accession>